<name>RLMH_STAA8</name>
<gene>
    <name evidence="1" type="primary">rlmH</name>
    <name type="ordered locus">SAOUHSC_00027</name>
</gene>
<proteinExistence type="inferred from homology"/>
<comment type="function">
    <text evidence="1">Specifically methylates the pseudouridine at position 1915 (m3Psi1915) in 23S rRNA.</text>
</comment>
<comment type="catalytic activity">
    <reaction evidence="1">
        <text>pseudouridine(1915) in 23S rRNA + S-adenosyl-L-methionine = N(3)-methylpseudouridine(1915) in 23S rRNA + S-adenosyl-L-homocysteine + H(+)</text>
        <dbReference type="Rhea" id="RHEA:42752"/>
        <dbReference type="Rhea" id="RHEA-COMP:10221"/>
        <dbReference type="Rhea" id="RHEA-COMP:10222"/>
        <dbReference type="ChEBI" id="CHEBI:15378"/>
        <dbReference type="ChEBI" id="CHEBI:57856"/>
        <dbReference type="ChEBI" id="CHEBI:59789"/>
        <dbReference type="ChEBI" id="CHEBI:65314"/>
        <dbReference type="ChEBI" id="CHEBI:74486"/>
        <dbReference type="EC" id="2.1.1.177"/>
    </reaction>
</comment>
<comment type="subunit">
    <text evidence="1">Homodimer.</text>
</comment>
<comment type="subcellular location">
    <subcellularLocation>
        <location evidence="1">Cytoplasm</location>
    </subcellularLocation>
</comment>
<comment type="similarity">
    <text evidence="1">Belongs to the RNA methyltransferase RlmH family.</text>
</comment>
<reference key="1">
    <citation type="journal article" date="1999" name="Antimicrob. Agents Chemother.">
        <title>Cloning and nucleotide sequence determination of the entire mec DNA of pre-methicillin-resistant Staphylococcus aureus N315.</title>
        <authorList>
            <person name="Ito T."/>
            <person name="Katayama Y."/>
            <person name="Hiramatsu K."/>
        </authorList>
    </citation>
    <scope>NUCLEOTIDE SEQUENCE [GENOMIC DNA]</scope>
</reference>
<reference key="2">
    <citation type="book" date="2006" name="Gram positive pathogens, 2nd edition">
        <title>The Staphylococcus aureus NCTC 8325 genome.</title>
        <editorList>
            <person name="Fischetti V."/>
            <person name="Novick R."/>
            <person name="Ferretti J."/>
            <person name="Portnoy D."/>
            <person name="Rood J."/>
        </editorList>
        <authorList>
            <person name="Gillaspy A.F."/>
            <person name="Worrell V."/>
            <person name="Orvis J."/>
            <person name="Roe B.A."/>
            <person name="Dyer D.W."/>
            <person name="Iandolo J.J."/>
        </authorList>
    </citation>
    <scope>NUCLEOTIDE SEQUENCE [LARGE SCALE GENOMIC DNA]</scope>
    <source>
        <strain>NCTC 8325 / PS 47</strain>
    </source>
</reference>
<accession>Q2G252</accession>
<accession>P0A0N8</accession>
<accession>Q9WVW7</accession>
<evidence type="ECO:0000255" key="1">
    <source>
        <dbReference type="HAMAP-Rule" id="MF_00658"/>
    </source>
</evidence>
<feature type="chain" id="PRO_0000249335" description="Ribosomal RNA large subunit methyltransferase H">
    <location>
        <begin position="1"/>
        <end position="159"/>
    </location>
</feature>
<feature type="binding site" evidence="1">
    <location>
        <position position="76"/>
    </location>
    <ligand>
        <name>S-adenosyl-L-methionine</name>
        <dbReference type="ChEBI" id="CHEBI:59789"/>
    </ligand>
</feature>
<feature type="binding site" evidence="1">
    <location>
        <position position="108"/>
    </location>
    <ligand>
        <name>S-adenosyl-L-methionine</name>
        <dbReference type="ChEBI" id="CHEBI:59789"/>
    </ligand>
</feature>
<feature type="binding site" evidence="1">
    <location>
        <begin position="127"/>
        <end position="132"/>
    </location>
    <ligand>
        <name>S-adenosyl-L-methionine</name>
        <dbReference type="ChEBI" id="CHEBI:59789"/>
    </ligand>
</feature>
<protein>
    <recommendedName>
        <fullName evidence="1">Ribosomal RNA large subunit methyltransferase H</fullName>
        <ecNumber evidence="1">2.1.1.177</ecNumber>
    </recommendedName>
    <alternativeName>
        <fullName evidence="1">23S rRNA (pseudouridine1915-N3)-methyltransferase</fullName>
    </alternativeName>
    <alternativeName>
        <fullName evidence="1">23S rRNA m3Psi1915 methyltransferase</fullName>
    </alternativeName>
    <alternativeName>
        <fullName evidence="1">rRNA (pseudouridine-N3-)-methyltransferase RlmH</fullName>
    </alternativeName>
</protein>
<keyword id="KW-0963">Cytoplasm</keyword>
<keyword id="KW-0489">Methyltransferase</keyword>
<keyword id="KW-1185">Reference proteome</keyword>
<keyword id="KW-0698">rRNA processing</keyword>
<keyword id="KW-0949">S-adenosyl-L-methionine</keyword>
<keyword id="KW-0808">Transferase</keyword>
<sequence length="159" mass="18306">MKITILAVGKLKEKYWKQAIAEYEKRLGPYTKIDIIEVPDEKAPENMSDKEIEQVKEKEGQRILAKIKPQSTVITLEIQGKMLSSEGLAQELNQRMTQGQSDFVFVIGGSNGLHKDVLQRSNYALSFSKMTFPHQMMRVVLIEQVYRAFKIMRGEAYHK</sequence>
<dbReference type="EC" id="2.1.1.177" evidence="1"/>
<dbReference type="EMBL" id="AB014440">
    <property type="protein sequence ID" value="BAA82252.1"/>
    <property type="molecule type" value="Genomic_DNA"/>
</dbReference>
<dbReference type="EMBL" id="CP000253">
    <property type="protein sequence ID" value="ABD29216.1"/>
    <property type="molecule type" value="Genomic_DNA"/>
</dbReference>
<dbReference type="PIR" id="T44141">
    <property type="entry name" value="T44141"/>
</dbReference>
<dbReference type="RefSeq" id="WP_000704775.1">
    <property type="nucleotide sequence ID" value="NZ_LS483365.1"/>
</dbReference>
<dbReference type="RefSeq" id="YP_498633.1">
    <property type="nucleotide sequence ID" value="NC_007795.1"/>
</dbReference>
<dbReference type="SMR" id="Q2G252"/>
<dbReference type="STRING" id="93061.SAOUHSC_00027"/>
<dbReference type="PaxDb" id="1280-SAXN108_0026"/>
<dbReference type="GeneID" id="3919295"/>
<dbReference type="GeneID" id="98344407"/>
<dbReference type="KEGG" id="sao:SAOUHSC_00027"/>
<dbReference type="PATRIC" id="fig|93061.5.peg.25"/>
<dbReference type="eggNOG" id="COG1576">
    <property type="taxonomic scope" value="Bacteria"/>
</dbReference>
<dbReference type="HOGENOM" id="CLU_100552_0_0_9"/>
<dbReference type="OrthoDB" id="9806643at2"/>
<dbReference type="PRO" id="PR:Q2G252"/>
<dbReference type="Proteomes" id="UP000008816">
    <property type="component" value="Chromosome"/>
</dbReference>
<dbReference type="GO" id="GO:0005737">
    <property type="term" value="C:cytoplasm"/>
    <property type="evidence" value="ECO:0007669"/>
    <property type="project" value="UniProtKB-SubCell"/>
</dbReference>
<dbReference type="GO" id="GO:0070038">
    <property type="term" value="F:rRNA (pseudouridine-N3-)-methyltransferase activity"/>
    <property type="evidence" value="ECO:0007669"/>
    <property type="project" value="UniProtKB-UniRule"/>
</dbReference>
<dbReference type="CDD" id="cd18081">
    <property type="entry name" value="RlmH-like"/>
    <property type="match status" value="1"/>
</dbReference>
<dbReference type="Gene3D" id="3.40.1280.10">
    <property type="match status" value="1"/>
</dbReference>
<dbReference type="HAMAP" id="MF_00658">
    <property type="entry name" value="23SrRNA_methyltr_H"/>
    <property type="match status" value="1"/>
</dbReference>
<dbReference type="InterPro" id="IPR029028">
    <property type="entry name" value="Alpha/beta_knot_MTases"/>
</dbReference>
<dbReference type="InterPro" id="IPR003742">
    <property type="entry name" value="RlmH-like"/>
</dbReference>
<dbReference type="InterPro" id="IPR029026">
    <property type="entry name" value="tRNA_m1G_MTases_N"/>
</dbReference>
<dbReference type="NCBIfam" id="NF000985">
    <property type="entry name" value="PRK00103.1-3"/>
    <property type="match status" value="1"/>
</dbReference>
<dbReference type="NCBIfam" id="NF000986">
    <property type="entry name" value="PRK00103.1-4"/>
    <property type="match status" value="1"/>
</dbReference>
<dbReference type="NCBIfam" id="TIGR00246">
    <property type="entry name" value="tRNA_RlmH_YbeA"/>
    <property type="match status" value="1"/>
</dbReference>
<dbReference type="PANTHER" id="PTHR33603">
    <property type="entry name" value="METHYLTRANSFERASE"/>
    <property type="match status" value="1"/>
</dbReference>
<dbReference type="PANTHER" id="PTHR33603:SF1">
    <property type="entry name" value="RIBOSOMAL RNA LARGE SUBUNIT METHYLTRANSFERASE H"/>
    <property type="match status" value="1"/>
</dbReference>
<dbReference type="Pfam" id="PF02590">
    <property type="entry name" value="SPOUT_MTase"/>
    <property type="match status" value="1"/>
</dbReference>
<dbReference type="PIRSF" id="PIRSF004505">
    <property type="entry name" value="MT_bac"/>
    <property type="match status" value="1"/>
</dbReference>
<dbReference type="SUPFAM" id="SSF75217">
    <property type="entry name" value="alpha/beta knot"/>
    <property type="match status" value="1"/>
</dbReference>
<organism>
    <name type="scientific">Staphylococcus aureus (strain NCTC 8325 / PS 47)</name>
    <dbReference type="NCBI Taxonomy" id="93061"/>
    <lineage>
        <taxon>Bacteria</taxon>
        <taxon>Bacillati</taxon>
        <taxon>Bacillota</taxon>
        <taxon>Bacilli</taxon>
        <taxon>Bacillales</taxon>
        <taxon>Staphylococcaceae</taxon>
        <taxon>Staphylococcus</taxon>
    </lineage>
</organism>